<sequence>MSKGPAVGIDLGTTYSCVGVFQHGKVEIIANDQGNRTTPSYVAFTDTERLIGDAAKNQVAMNPTNTVFDAKRLIGRRFDDHVVQSDMNDWPFNVINDNTRPKVQVEYKGETKSFYPEEVSSMVLTKMKEIAEAYLGKTVNNAVITVPAYFNDSQRQATKDAGTISGLNVLRIINEPTAAAIAYGLDKKVGSERNVLIFDLGGGTFDVSILTIEDGIFEVKSTAGDTHLGGEDFDNRMVNHFIAEFKRKYKKDISDNKRAVRRLRSACERAKRTLSSSTQASIEIDSLYEGVDFYTSITRARFEELNADLFRGTLDPVEKSLRDAKMDKGQIHDIVLVGGSTRIPKIQKLLQDFFNGKELNKSINPDEAVAYGAAVQAAILSGDKSENVQDLLLLDVTPLSLGIETAGGVMTVLIKRNTTIPTKQTQTFTTYSDNQPGVLNQVYEVGAMTKDNNLLGKFELTGIPPALWCPQIEVTFDIDANGIMNVSAVDKSTGKENKITITNDKGRLSKEDIERMVQEAEKYKAEDDVQRDKVSAKNGLESYAFNMKSTVEDEKLAGKISDEDKQKILDKCNEVISWLDKNQTAERDEYVHQQKELEKVCNPIITKLYQSAGGMPGGCQRECQEVSLELVVLLAVALLDQPLKKLIKHSMTSPSKIFTKKTLFKCNMQSIKSVMRLNQFPFITIT</sequence>
<name>HSP7C_ORYLA</name>
<proteinExistence type="evidence at transcript level"/>
<feature type="chain" id="PRO_0000078278" description="Heat shock cognate 71 kDa protein">
    <location>
        <begin position="1"/>
        <end position="686"/>
    </location>
</feature>
<feature type="region of interest" description="Nucleotide-binding domain (NBD)" evidence="2">
    <location>
        <begin position="2"/>
        <end position="386"/>
    </location>
</feature>
<feature type="region of interest" description="Substrate-binding domain (SBD)" evidence="2">
    <location>
        <begin position="394"/>
        <end position="507"/>
    </location>
</feature>
<keyword id="KW-0067">ATP-binding</keyword>
<keyword id="KW-0547">Nucleotide-binding</keyword>
<keyword id="KW-1185">Reference proteome</keyword>
<keyword id="KW-0346">Stress response</keyword>
<gene>
    <name type="primary">hsc70</name>
</gene>
<protein>
    <recommendedName>
        <fullName>Heat shock cognate 71 kDa protein</fullName>
    </recommendedName>
    <alternativeName>
        <fullName>Hsc70.1</fullName>
    </alternativeName>
</protein>
<reference key="1">
    <citation type="journal article" date="1995" name="Jpn. J. Genet.">
        <title>Cloning and characterization of cDNAs for 70-kDa heat-shock proteins (Hsp70) from two fish species of the genus Oryzias.</title>
        <authorList>
            <person name="Arai A."/>
            <person name="Naruse K."/>
            <person name="Mitani H."/>
            <person name="Shima A."/>
        </authorList>
    </citation>
    <scope>NUCLEOTIDE SEQUENCE [MRNA]</scope>
    <source>
        <strain>HB32</strain>
    </source>
</reference>
<dbReference type="EMBL" id="D13669">
    <property type="protein sequence ID" value="BAA76887.1"/>
    <property type="molecule type" value="mRNA"/>
</dbReference>
<dbReference type="RefSeq" id="NP_001098270.1">
    <property type="nucleotide sequence ID" value="NM_001104800.1"/>
</dbReference>
<dbReference type="SMR" id="Q9W6Y1"/>
<dbReference type="STRING" id="8090.ENSORLP00000036121"/>
<dbReference type="GeneID" id="100049425"/>
<dbReference type="KEGG" id="ola:100049425"/>
<dbReference type="CTD" id="3312"/>
<dbReference type="eggNOG" id="KOG0101">
    <property type="taxonomic scope" value="Eukaryota"/>
</dbReference>
<dbReference type="InParanoid" id="Q9W6Y1"/>
<dbReference type="OrthoDB" id="2401965at2759"/>
<dbReference type="Proteomes" id="UP000001038">
    <property type="component" value="Unplaced"/>
</dbReference>
<dbReference type="Proteomes" id="UP000265180">
    <property type="component" value="Chromosome 9"/>
</dbReference>
<dbReference type="Proteomes" id="UP000265200">
    <property type="component" value="Chromosome 9"/>
</dbReference>
<dbReference type="GO" id="GO:0005737">
    <property type="term" value="C:cytoplasm"/>
    <property type="evidence" value="ECO:0000318"/>
    <property type="project" value="GO_Central"/>
</dbReference>
<dbReference type="GO" id="GO:0005829">
    <property type="term" value="C:cytosol"/>
    <property type="evidence" value="ECO:0000318"/>
    <property type="project" value="GO_Central"/>
</dbReference>
<dbReference type="GO" id="GO:0005634">
    <property type="term" value="C:nucleus"/>
    <property type="evidence" value="ECO:0000318"/>
    <property type="project" value="GO_Central"/>
</dbReference>
<dbReference type="GO" id="GO:0005886">
    <property type="term" value="C:plasma membrane"/>
    <property type="evidence" value="ECO:0000318"/>
    <property type="project" value="GO_Central"/>
</dbReference>
<dbReference type="GO" id="GO:0005524">
    <property type="term" value="F:ATP binding"/>
    <property type="evidence" value="ECO:0007669"/>
    <property type="project" value="UniProtKB-KW"/>
</dbReference>
<dbReference type="GO" id="GO:0016887">
    <property type="term" value="F:ATP hydrolysis activity"/>
    <property type="evidence" value="ECO:0000318"/>
    <property type="project" value="GO_Central"/>
</dbReference>
<dbReference type="GO" id="GO:0140662">
    <property type="term" value="F:ATP-dependent protein folding chaperone"/>
    <property type="evidence" value="ECO:0007669"/>
    <property type="project" value="InterPro"/>
</dbReference>
<dbReference type="GO" id="GO:0031072">
    <property type="term" value="F:heat shock protein binding"/>
    <property type="evidence" value="ECO:0000318"/>
    <property type="project" value="GO_Central"/>
</dbReference>
<dbReference type="GO" id="GO:0044183">
    <property type="term" value="F:protein folding chaperone"/>
    <property type="evidence" value="ECO:0000318"/>
    <property type="project" value="GO_Central"/>
</dbReference>
<dbReference type="GO" id="GO:0051085">
    <property type="term" value="P:chaperone cofactor-dependent protein refolding"/>
    <property type="evidence" value="ECO:0000318"/>
    <property type="project" value="GO_Central"/>
</dbReference>
<dbReference type="GO" id="GO:0042026">
    <property type="term" value="P:protein refolding"/>
    <property type="evidence" value="ECO:0000318"/>
    <property type="project" value="GO_Central"/>
</dbReference>
<dbReference type="CDD" id="cd10233">
    <property type="entry name" value="ASKHA_NBD_HSP70_HSPA1"/>
    <property type="match status" value="1"/>
</dbReference>
<dbReference type="FunFam" id="2.60.34.10:FF:000041">
    <property type="entry name" value="Endoplasmic reticulum chaperone BiP"/>
    <property type="match status" value="1"/>
</dbReference>
<dbReference type="FunFam" id="3.30.420.40:FF:000172">
    <property type="entry name" value="Heat shock 70 kDa protein"/>
    <property type="match status" value="1"/>
</dbReference>
<dbReference type="FunFam" id="3.30.30.30:FF:000001">
    <property type="entry name" value="heat shock 70 kDa protein-like"/>
    <property type="match status" value="1"/>
</dbReference>
<dbReference type="FunFam" id="3.30.420.40:FF:000028">
    <property type="entry name" value="heat shock 70 kDa protein-like"/>
    <property type="match status" value="1"/>
</dbReference>
<dbReference type="FunFam" id="3.30.420.40:FF:000135">
    <property type="entry name" value="Heat shock cognate 71 kDa protein"/>
    <property type="match status" value="1"/>
</dbReference>
<dbReference type="FunFam" id="3.90.640.10:FF:000134">
    <property type="entry name" value="Heat shock cognate 71 kDa protein"/>
    <property type="match status" value="1"/>
</dbReference>
<dbReference type="FunFam" id="1.20.1270.10:FF:000003">
    <property type="entry name" value="heat shock cognate 71 kDa protein-like"/>
    <property type="match status" value="1"/>
</dbReference>
<dbReference type="FunFam" id="3.30.420.40:FF:000026">
    <property type="entry name" value="Heat shock protein 70"/>
    <property type="match status" value="1"/>
</dbReference>
<dbReference type="FunFam" id="2.60.34.10:FF:000056">
    <property type="entry name" value="Protein CBG18239"/>
    <property type="match status" value="1"/>
</dbReference>
<dbReference type="Gene3D" id="1.20.1270.10">
    <property type="match status" value="1"/>
</dbReference>
<dbReference type="Gene3D" id="3.30.30.30">
    <property type="match status" value="1"/>
</dbReference>
<dbReference type="Gene3D" id="3.30.420.40">
    <property type="match status" value="2"/>
</dbReference>
<dbReference type="Gene3D" id="3.90.640.10">
    <property type="entry name" value="Actin, Chain A, domain 4"/>
    <property type="match status" value="1"/>
</dbReference>
<dbReference type="Gene3D" id="2.60.34.10">
    <property type="entry name" value="Substrate Binding Domain Of DNAk, Chain A, domain 1"/>
    <property type="match status" value="1"/>
</dbReference>
<dbReference type="InterPro" id="IPR043129">
    <property type="entry name" value="ATPase_NBD"/>
</dbReference>
<dbReference type="InterPro" id="IPR018181">
    <property type="entry name" value="Heat_shock_70_CS"/>
</dbReference>
<dbReference type="InterPro" id="IPR029048">
    <property type="entry name" value="HSP70_C_sf"/>
</dbReference>
<dbReference type="InterPro" id="IPR029047">
    <property type="entry name" value="HSP70_peptide-bd_sf"/>
</dbReference>
<dbReference type="InterPro" id="IPR013126">
    <property type="entry name" value="Hsp_70_fam"/>
</dbReference>
<dbReference type="NCBIfam" id="NF001413">
    <property type="entry name" value="PRK00290.1"/>
    <property type="match status" value="1"/>
</dbReference>
<dbReference type="PANTHER" id="PTHR19375">
    <property type="entry name" value="HEAT SHOCK PROTEIN 70KDA"/>
    <property type="match status" value="1"/>
</dbReference>
<dbReference type="Pfam" id="PF00012">
    <property type="entry name" value="HSP70"/>
    <property type="match status" value="1"/>
</dbReference>
<dbReference type="PRINTS" id="PR00301">
    <property type="entry name" value="HEATSHOCK70"/>
</dbReference>
<dbReference type="SUPFAM" id="SSF53067">
    <property type="entry name" value="Actin-like ATPase domain"/>
    <property type="match status" value="2"/>
</dbReference>
<dbReference type="SUPFAM" id="SSF100934">
    <property type="entry name" value="Heat shock protein 70kD (HSP70), C-terminal subdomain"/>
    <property type="match status" value="1"/>
</dbReference>
<dbReference type="SUPFAM" id="SSF100920">
    <property type="entry name" value="Heat shock protein 70kD (HSP70), peptide-binding domain"/>
    <property type="match status" value="1"/>
</dbReference>
<dbReference type="PROSITE" id="PS00297">
    <property type="entry name" value="HSP70_1"/>
    <property type="match status" value="1"/>
</dbReference>
<dbReference type="PROSITE" id="PS00329">
    <property type="entry name" value="HSP70_2"/>
    <property type="match status" value="1"/>
</dbReference>
<dbReference type="PROSITE" id="PS01036">
    <property type="entry name" value="HSP70_3"/>
    <property type="match status" value="1"/>
</dbReference>
<organism>
    <name type="scientific">Oryzias latipes</name>
    <name type="common">Japanese rice fish</name>
    <name type="synonym">Japanese killifish</name>
    <dbReference type="NCBI Taxonomy" id="8090"/>
    <lineage>
        <taxon>Eukaryota</taxon>
        <taxon>Metazoa</taxon>
        <taxon>Chordata</taxon>
        <taxon>Craniata</taxon>
        <taxon>Vertebrata</taxon>
        <taxon>Euteleostomi</taxon>
        <taxon>Actinopterygii</taxon>
        <taxon>Neopterygii</taxon>
        <taxon>Teleostei</taxon>
        <taxon>Neoteleostei</taxon>
        <taxon>Acanthomorphata</taxon>
        <taxon>Ovalentaria</taxon>
        <taxon>Atherinomorphae</taxon>
        <taxon>Beloniformes</taxon>
        <taxon>Adrianichthyidae</taxon>
        <taxon>Oryziinae</taxon>
        <taxon>Oryzias</taxon>
    </lineage>
</organism>
<accession>Q9W6Y1</accession>
<evidence type="ECO:0000250" key="1">
    <source>
        <dbReference type="UniProtKB" id="P0DMV8"/>
    </source>
</evidence>
<evidence type="ECO:0000250" key="2">
    <source>
        <dbReference type="UniProtKB" id="P11142"/>
    </source>
</evidence>
<evidence type="ECO:0000305" key="3"/>
<comment type="function">
    <text evidence="1">Molecular chaperone implicated in a wide variety of cellular processes, including protection of the proteome from stress, folding and transport of newly synthesized polypeptides, activation of proteolysis of misfolded proteins and the formation and dissociation of protein complexes. Plays a pivotal role in the protein quality control system, ensuring the correct folding of proteins, the re-folding of misfolded proteins and controlling the targeting of proteins for subsequent degradation. This is achieved through cycles of ATP binding, ATP hydrolysis and ADP release, mediated by co-chaperones. The affinity for polypeptides is regulated by its nucleotide bound state. In the ATP-bound form, it has a low affinity for substrate proteins. However, upon hydrolysis of the ATP to ADP, it undergoes a conformational change that increases its affinity for substrate proteins. It goes through repeated cycles of ATP hydrolysis and nucleotide exchange, which permits cycles of substrate binding and release.</text>
</comment>
<comment type="domain">
    <text evidence="1">The N-terminal nucleotide binding domain (NBD) (also known as the ATPase domain) is responsible for binding and hydrolyzing ATP. The C-terminal substrate-binding domain (SBD) (also known as peptide-binding domain) binds to the client/substrate proteins. The two domains are allosterically coupled so that, when ATP is bound to the NBD, the SBD binds relatively weakly to clients. When ADP is bound in the NBD, a conformational change enhances the affinity of the SBD for client proteins.</text>
</comment>
<comment type="similarity">
    <text evidence="3">Belongs to the heat shock protein 70 family.</text>
</comment>